<evidence type="ECO:0000255" key="1">
    <source>
        <dbReference type="HAMAP-Rule" id="MF_00151"/>
    </source>
</evidence>
<feature type="chain" id="PRO_1000096803" description="Phosphopantetheine adenylyltransferase">
    <location>
        <begin position="1"/>
        <end position="165"/>
    </location>
</feature>
<feature type="binding site" evidence="1">
    <location>
        <begin position="9"/>
        <end position="10"/>
    </location>
    <ligand>
        <name>ATP</name>
        <dbReference type="ChEBI" id="CHEBI:30616"/>
    </ligand>
</feature>
<feature type="binding site" evidence="1">
    <location>
        <position position="9"/>
    </location>
    <ligand>
        <name>substrate</name>
    </ligand>
</feature>
<feature type="binding site" evidence="1">
    <location>
        <position position="17"/>
    </location>
    <ligand>
        <name>ATP</name>
        <dbReference type="ChEBI" id="CHEBI:30616"/>
    </ligand>
</feature>
<feature type="binding site" evidence="1">
    <location>
        <position position="41"/>
    </location>
    <ligand>
        <name>substrate</name>
    </ligand>
</feature>
<feature type="binding site" evidence="1">
    <location>
        <position position="73"/>
    </location>
    <ligand>
        <name>substrate</name>
    </ligand>
</feature>
<feature type="binding site" evidence="1">
    <location>
        <position position="87"/>
    </location>
    <ligand>
        <name>substrate</name>
    </ligand>
</feature>
<feature type="binding site" evidence="1">
    <location>
        <begin position="88"/>
        <end position="90"/>
    </location>
    <ligand>
        <name>ATP</name>
        <dbReference type="ChEBI" id="CHEBI:30616"/>
    </ligand>
</feature>
<feature type="binding site" evidence="1">
    <location>
        <position position="98"/>
    </location>
    <ligand>
        <name>ATP</name>
        <dbReference type="ChEBI" id="CHEBI:30616"/>
    </ligand>
</feature>
<feature type="binding site" evidence="1">
    <location>
        <begin position="123"/>
        <end position="129"/>
    </location>
    <ligand>
        <name>ATP</name>
        <dbReference type="ChEBI" id="CHEBI:30616"/>
    </ligand>
</feature>
<feature type="site" description="Transition state stabilizer" evidence="1">
    <location>
        <position position="17"/>
    </location>
</feature>
<dbReference type="EC" id="2.7.7.3" evidence="1"/>
<dbReference type="EMBL" id="CP000875">
    <property type="protein sequence ID" value="ABX03388.1"/>
    <property type="molecule type" value="Genomic_DNA"/>
</dbReference>
<dbReference type="SMR" id="A9AWY7"/>
<dbReference type="FunCoup" id="A9AWY7">
    <property type="interactions" value="461"/>
</dbReference>
<dbReference type="STRING" id="316274.Haur_0740"/>
<dbReference type="KEGG" id="hau:Haur_0740"/>
<dbReference type="eggNOG" id="COG0669">
    <property type="taxonomic scope" value="Bacteria"/>
</dbReference>
<dbReference type="HOGENOM" id="CLU_100149_0_1_0"/>
<dbReference type="InParanoid" id="A9AWY7"/>
<dbReference type="UniPathway" id="UPA00241">
    <property type="reaction ID" value="UER00355"/>
</dbReference>
<dbReference type="Proteomes" id="UP000000787">
    <property type="component" value="Chromosome"/>
</dbReference>
<dbReference type="GO" id="GO:0005737">
    <property type="term" value="C:cytoplasm"/>
    <property type="evidence" value="ECO:0007669"/>
    <property type="project" value="UniProtKB-SubCell"/>
</dbReference>
<dbReference type="GO" id="GO:0005524">
    <property type="term" value="F:ATP binding"/>
    <property type="evidence" value="ECO:0007669"/>
    <property type="project" value="UniProtKB-KW"/>
</dbReference>
<dbReference type="GO" id="GO:0004595">
    <property type="term" value="F:pantetheine-phosphate adenylyltransferase activity"/>
    <property type="evidence" value="ECO:0007669"/>
    <property type="project" value="UniProtKB-UniRule"/>
</dbReference>
<dbReference type="GO" id="GO:0015937">
    <property type="term" value="P:coenzyme A biosynthetic process"/>
    <property type="evidence" value="ECO:0007669"/>
    <property type="project" value="UniProtKB-UniRule"/>
</dbReference>
<dbReference type="CDD" id="cd02163">
    <property type="entry name" value="PPAT"/>
    <property type="match status" value="1"/>
</dbReference>
<dbReference type="Gene3D" id="3.40.50.620">
    <property type="entry name" value="HUPs"/>
    <property type="match status" value="1"/>
</dbReference>
<dbReference type="HAMAP" id="MF_00151">
    <property type="entry name" value="PPAT_bact"/>
    <property type="match status" value="1"/>
</dbReference>
<dbReference type="InterPro" id="IPR004821">
    <property type="entry name" value="Cyt_trans-like"/>
</dbReference>
<dbReference type="InterPro" id="IPR001980">
    <property type="entry name" value="PPAT"/>
</dbReference>
<dbReference type="InterPro" id="IPR014729">
    <property type="entry name" value="Rossmann-like_a/b/a_fold"/>
</dbReference>
<dbReference type="NCBIfam" id="TIGR01510">
    <property type="entry name" value="coaD_prev_kdtB"/>
    <property type="match status" value="1"/>
</dbReference>
<dbReference type="NCBIfam" id="TIGR00125">
    <property type="entry name" value="cyt_tran_rel"/>
    <property type="match status" value="1"/>
</dbReference>
<dbReference type="PANTHER" id="PTHR21342">
    <property type="entry name" value="PHOSPHOPANTETHEINE ADENYLYLTRANSFERASE"/>
    <property type="match status" value="1"/>
</dbReference>
<dbReference type="PANTHER" id="PTHR21342:SF1">
    <property type="entry name" value="PHOSPHOPANTETHEINE ADENYLYLTRANSFERASE"/>
    <property type="match status" value="1"/>
</dbReference>
<dbReference type="Pfam" id="PF01467">
    <property type="entry name" value="CTP_transf_like"/>
    <property type="match status" value="1"/>
</dbReference>
<dbReference type="PRINTS" id="PR01020">
    <property type="entry name" value="LPSBIOSNTHSS"/>
</dbReference>
<dbReference type="SUPFAM" id="SSF52374">
    <property type="entry name" value="Nucleotidylyl transferase"/>
    <property type="match status" value="1"/>
</dbReference>
<sequence length="165" mass="18214">MTIAVYPASFDPITNGHLDVAARASRLFDELVLAVAHRPYKKLLFTTEQRIAMIRESVAHLPNVRVDAFSSLVVEYALEIGATVLVRGLRAATDFEHEFQMAHINHHLAPTLDTVCLMADQRFTLLSSSAVREIAAYGGDVSSFVPAHIALALKQAYQTHEESRA</sequence>
<accession>A9AWY7</accession>
<keyword id="KW-0067">ATP-binding</keyword>
<keyword id="KW-0173">Coenzyme A biosynthesis</keyword>
<keyword id="KW-0963">Cytoplasm</keyword>
<keyword id="KW-0460">Magnesium</keyword>
<keyword id="KW-0547">Nucleotide-binding</keyword>
<keyword id="KW-0548">Nucleotidyltransferase</keyword>
<keyword id="KW-0808">Transferase</keyword>
<gene>
    <name evidence="1" type="primary">coaD</name>
    <name type="ordered locus">Haur_0740</name>
</gene>
<reference key="1">
    <citation type="journal article" date="2011" name="Stand. Genomic Sci.">
        <title>Complete genome sequence of the filamentous gliding predatory bacterium Herpetosiphon aurantiacus type strain (114-95(T)).</title>
        <authorList>
            <person name="Kiss H."/>
            <person name="Nett M."/>
            <person name="Domin N."/>
            <person name="Martin K."/>
            <person name="Maresca J.A."/>
            <person name="Copeland A."/>
            <person name="Lapidus A."/>
            <person name="Lucas S."/>
            <person name="Berry K.W."/>
            <person name="Glavina Del Rio T."/>
            <person name="Dalin E."/>
            <person name="Tice H."/>
            <person name="Pitluck S."/>
            <person name="Richardson P."/>
            <person name="Bruce D."/>
            <person name="Goodwin L."/>
            <person name="Han C."/>
            <person name="Detter J.C."/>
            <person name="Schmutz J."/>
            <person name="Brettin T."/>
            <person name="Land M."/>
            <person name="Hauser L."/>
            <person name="Kyrpides N.C."/>
            <person name="Ivanova N."/>
            <person name="Goeker M."/>
            <person name="Woyke T."/>
            <person name="Klenk H.P."/>
            <person name="Bryant D.A."/>
        </authorList>
    </citation>
    <scope>NUCLEOTIDE SEQUENCE [LARGE SCALE GENOMIC DNA]</scope>
    <source>
        <strain>ATCC 23779 / DSM 785 / 114-95</strain>
    </source>
</reference>
<protein>
    <recommendedName>
        <fullName evidence="1">Phosphopantetheine adenylyltransferase</fullName>
        <ecNumber evidence="1">2.7.7.3</ecNumber>
    </recommendedName>
    <alternativeName>
        <fullName evidence="1">Dephospho-CoA pyrophosphorylase</fullName>
    </alternativeName>
    <alternativeName>
        <fullName evidence="1">Pantetheine-phosphate adenylyltransferase</fullName>
        <shortName evidence="1">PPAT</shortName>
    </alternativeName>
</protein>
<organism>
    <name type="scientific">Herpetosiphon aurantiacus (strain ATCC 23779 / DSM 785 / 114-95)</name>
    <dbReference type="NCBI Taxonomy" id="316274"/>
    <lineage>
        <taxon>Bacteria</taxon>
        <taxon>Bacillati</taxon>
        <taxon>Chloroflexota</taxon>
        <taxon>Chloroflexia</taxon>
        <taxon>Herpetosiphonales</taxon>
        <taxon>Herpetosiphonaceae</taxon>
        <taxon>Herpetosiphon</taxon>
    </lineage>
</organism>
<proteinExistence type="inferred from homology"/>
<comment type="function">
    <text evidence="1">Reversibly transfers an adenylyl group from ATP to 4'-phosphopantetheine, yielding dephospho-CoA (dPCoA) and pyrophosphate.</text>
</comment>
<comment type="catalytic activity">
    <reaction evidence="1">
        <text>(R)-4'-phosphopantetheine + ATP + H(+) = 3'-dephospho-CoA + diphosphate</text>
        <dbReference type="Rhea" id="RHEA:19801"/>
        <dbReference type="ChEBI" id="CHEBI:15378"/>
        <dbReference type="ChEBI" id="CHEBI:30616"/>
        <dbReference type="ChEBI" id="CHEBI:33019"/>
        <dbReference type="ChEBI" id="CHEBI:57328"/>
        <dbReference type="ChEBI" id="CHEBI:61723"/>
        <dbReference type="EC" id="2.7.7.3"/>
    </reaction>
</comment>
<comment type="cofactor">
    <cofactor evidence="1">
        <name>Mg(2+)</name>
        <dbReference type="ChEBI" id="CHEBI:18420"/>
    </cofactor>
</comment>
<comment type="pathway">
    <text evidence="1">Cofactor biosynthesis; coenzyme A biosynthesis; CoA from (R)-pantothenate: step 4/5.</text>
</comment>
<comment type="subunit">
    <text evidence="1">Homohexamer.</text>
</comment>
<comment type="subcellular location">
    <subcellularLocation>
        <location evidence="1">Cytoplasm</location>
    </subcellularLocation>
</comment>
<comment type="similarity">
    <text evidence="1">Belongs to the bacterial CoaD family.</text>
</comment>
<name>COAD_HERA2</name>